<reference key="1">
    <citation type="journal article" date="2010" name="J. Bacteriol.">
        <title>Complete genome sequence of Beijerinckia indica subsp. indica.</title>
        <authorList>
            <person name="Tamas I."/>
            <person name="Dedysh S.N."/>
            <person name="Liesack W."/>
            <person name="Stott M.B."/>
            <person name="Alam M."/>
            <person name="Murrell J.C."/>
            <person name="Dunfield P.F."/>
        </authorList>
    </citation>
    <scope>NUCLEOTIDE SEQUENCE [LARGE SCALE GENOMIC DNA]</scope>
    <source>
        <strain>ATCC 9039 / DSM 1715 / NCIMB 8712</strain>
    </source>
</reference>
<protein>
    <recommendedName>
        <fullName evidence="1">Fluoride-specific ion channel FluC</fullName>
    </recommendedName>
</protein>
<feature type="chain" id="PRO_1000189709" description="Fluoride-specific ion channel FluC">
    <location>
        <begin position="1"/>
        <end position="127"/>
    </location>
</feature>
<feature type="transmembrane region" description="Helical" evidence="1">
    <location>
        <begin position="28"/>
        <end position="48"/>
    </location>
</feature>
<feature type="transmembrane region" description="Helical" evidence="1">
    <location>
        <begin position="73"/>
        <end position="93"/>
    </location>
</feature>
<feature type="transmembrane region" description="Helical" evidence="1">
    <location>
        <begin position="98"/>
        <end position="118"/>
    </location>
</feature>
<feature type="binding site" evidence="1">
    <location>
        <position position="77"/>
    </location>
    <ligand>
        <name>Na(+)</name>
        <dbReference type="ChEBI" id="CHEBI:29101"/>
        <note>structural</note>
    </ligand>
</feature>
<feature type="binding site" evidence="1">
    <location>
        <position position="80"/>
    </location>
    <ligand>
        <name>Na(+)</name>
        <dbReference type="ChEBI" id="CHEBI:29101"/>
        <note>structural</note>
    </ligand>
</feature>
<name>FLUC_BEII9</name>
<organism>
    <name type="scientific">Beijerinckia indica subsp. indica (strain ATCC 9039 / DSM 1715 / NCIMB 8712)</name>
    <dbReference type="NCBI Taxonomy" id="395963"/>
    <lineage>
        <taxon>Bacteria</taxon>
        <taxon>Pseudomonadati</taxon>
        <taxon>Pseudomonadota</taxon>
        <taxon>Alphaproteobacteria</taxon>
        <taxon>Hyphomicrobiales</taxon>
        <taxon>Beijerinckiaceae</taxon>
        <taxon>Beijerinckia</taxon>
    </lineage>
</organism>
<keyword id="KW-0997">Cell inner membrane</keyword>
<keyword id="KW-1003">Cell membrane</keyword>
<keyword id="KW-0407">Ion channel</keyword>
<keyword id="KW-0406">Ion transport</keyword>
<keyword id="KW-0472">Membrane</keyword>
<keyword id="KW-0479">Metal-binding</keyword>
<keyword id="KW-1185">Reference proteome</keyword>
<keyword id="KW-0915">Sodium</keyword>
<keyword id="KW-0812">Transmembrane</keyword>
<keyword id="KW-1133">Transmembrane helix</keyword>
<keyword id="KW-0813">Transport</keyword>
<accession>B2IK19</accession>
<dbReference type="EMBL" id="CP001016">
    <property type="protein sequence ID" value="ACB94951.1"/>
    <property type="molecule type" value="Genomic_DNA"/>
</dbReference>
<dbReference type="RefSeq" id="WP_012384308.1">
    <property type="nucleotide sequence ID" value="NC_010581.1"/>
</dbReference>
<dbReference type="SMR" id="B2IK19"/>
<dbReference type="STRING" id="395963.Bind_1311"/>
<dbReference type="KEGG" id="bid:Bind_1311"/>
<dbReference type="eggNOG" id="COG0239">
    <property type="taxonomic scope" value="Bacteria"/>
</dbReference>
<dbReference type="HOGENOM" id="CLU_114342_3_0_5"/>
<dbReference type="OrthoDB" id="9806299at2"/>
<dbReference type="Proteomes" id="UP000001695">
    <property type="component" value="Chromosome"/>
</dbReference>
<dbReference type="GO" id="GO:0005886">
    <property type="term" value="C:plasma membrane"/>
    <property type="evidence" value="ECO:0007669"/>
    <property type="project" value="UniProtKB-SubCell"/>
</dbReference>
<dbReference type="GO" id="GO:0062054">
    <property type="term" value="F:fluoride channel activity"/>
    <property type="evidence" value="ECO:0007669"/>
    <property type="project" value="UniProtKB-UniRule"/>
</dbReference>
<dbReference type="GO" id="GO:0046872">
    <property type="term" value="F:metal ion binding"/>
    <property type="evidence" value="ECO:0007669"/>
    <property type="project" value="UniProtKB-KW"/>
</dbReference>
<dbReference type="GO" id="GO:0140114">
    <property type="term" value="P:cellular detoxification of fluoride"/>
    <property type="evidence" value="ECO:0007669"/>
    <property type="project" value="UniProtKB-UniRule"/>
</dbReference>
<dbReference type="HAMAP" id="MF_00454">
    <property type="entry name" value="FluC"/>
    <property type="match status" value="1"/>
</dbReference>
<dbReference type="InterPro" id="IPR003691">
    <property type="entry name" value="FluC"/>
</dbReference>
<dbReference type="NCBIfam" id="NF010794">
    <property type="entry name" value="PRK14198.1"/>
    <property type="match status" value="1"/>
</dbReference>
<dbReference type="PANTHER" id="PTHR28259">
    <property type="entry name" value="FLUORIDE EXPORT PROTEIN 1-RELATED"/>
    <property type="match status" value="1"/>
</dbReference>
<dbReference type="PANTHER" id="PTHR28259:SF1">
    <property type="entry name" value="FLUORIDE EXPORT PROTEIN 1-RELATED"/>
    <property type="match status" value="1"/>
</dbReference>
<dbReference type="Pfam" id="PF02537">
    <property type="entry name" value="CRCB"/>
    <property type="match status" value="1"/>
</dbReference>
<sequence length="127" mass="13314">MRDSLLVFCGAGLGGLLRHGLNQVSLRLALFGFPWMTCFINISGSLAMGLLVGYLAGHGDSRFPQSLRLFLATGVLGGYTTFSTFSLENALLIERGAVGLAVLYSLVSVGLGLGGLFLGLTLTRSLS</sequence>
<evidence type="ECO:0000255" key="1">
    <source>
        <dbReference type="HAMAP-Rule" id="MF_00454"/>
    </source>
</evidence>
<gene>
    <name evidence="1" type="primary">fluC</name>
    <name evidence="1" type="synonym">crcB</name>
    <name type="ordered locus">Bind_1311</name>
</gene>
<proteinExistence type="inferred from homology"/>
<comment type="function">
    <text evidence="1">Fluoride-specific ion channel. Important for reducing fluoride concentration in the cell, thus reducing its toxicity.</text>
</comment>
<comment type="catalytic activity">
    <reaction evidence="1">
        <text>fluoride(in) = fluoride(out)</text>
        <dbReference type="Rhea" id="RHEA:76159"/>
        <dbReference type="ChEBI" id="CHEBI:17051"/>
    </reaction>
    <physiologicalReaction direction="left-to-right" evidence="1">
        <dbReference type="Rhea" id="RHEA:76160"/>
    </physiologicalReaction>
</comment>
<comment type="activity regulation">
    <text evidence="1">Na(+) is not transported, but it plays an essential structural role and its presence is essential for fluoride channel function.</text>
</comment>
<comment type="subcellular location">
    <subcellularLocation>
        <location evidence="1">Cell inner membrane</location>
        <topology evidence="1">Multi-pass membrane protein</topology>
    </subcellularLocation>
</comment>
<comment type="similarity">
    <text evidence="1">Belongs to the fluoride channel Fluc/FEX (TC 1.A.43) family.</text>
</comment>